<feature type="chain" id="PRO_0000238455" description="AMP deaminase">
    <location>
        <begin position="1"/>
        <end position="839"/>
    </location>
</feature>
<feature type="transmembrane region" description="Helical" evidence="2">
    <location>
        <begin position="8"/>
        <end position="28"/>
    </location>
</feature>
<feature type="region of interest" description="Disordered" evidence="3">
    <location>
        <begin position="40"/>
        <end position="167"/>
    </location>
</feature>
<feature type="compositionally biased region" description="Gly residues" evidence="3">
    <location>
        <begin position="85"/>
        <end position="94"/>
    </location>
</feature>
<feature type="compositionally biased region" description="Acidic residues" evidence="3">
    <location>
        <begin position="153"/>
        <end position="162"/>
    </location>
</feature>
<feature type="active site" description="Proton acceptor" evidence="10">
    <location>
        <position position="681"/>
    </location>
</feature>
<feature type="binding site" evidence="2">
    <location>
        <begin position="289"/>
        <end position="296"/>
    </location>
    <ligand>
        <name>ATP</name>
        <dbReference type="ChEBI" id="CHEBI:30616"/>
    </ligand>
</feature>
<feature type="binding site">
    <location>
        <position position="391"/>
    </location>
    <ligand>
        <name>Zn(2+)</name>
        <dbReference type="ChEBI" id="CHEBI:29105"/>
        <note>catalytic</note>
    </ligand>
</feature>
<feature type="binding site">
    <location>
        <position position="393"/>
    </location>
    <ligand>
        <name>substrate</name>
    </ligand>
</feature>
<feature type="binding site">
    <location>
        <position position="393"/>
    </location>
    <ligand>
        <name>Zn(2+)</name>
        <dbReference type="ChEBI" id="CHEBI:29105"/>
        <note>catalytic</note>
    </ligand>
</feature>
<feature type="binding site">
    <location>
        <begin position="462"/>
        <end position="467"/>
    </location>
    <ligand>
        <name>substrate</name>
    </ligand>
</feature>
<feature type="binding site">
    <location>
        <position position="659"/>
    </location>
    <ligand>
        <name>Zn(2+)</name>
        <dbReference type="ChEBI" id="CHEBI:29105"/>
        <note>catalytic</note>
    </ligand>
</feature>
<feature type="binding site">
    <location>
        <position position="662"/>
    </location>
    <ligand>
        <name>substrate</name>
    </ligand>
</feature>
<feature type="binding site">
    <location>
        <position position="736"/>
    </location>
    <ligand>
        <name>Zn(2+)</name>
        <dbReference type="ChEBI" id="CHEBI:29105"/>
        <note>catalytic</note>
    </ligand>
</feature>
<feature type="binding site">
    <location>
        <begin position="737"/>
        <end position="740"/>
    </location>
    <ligand>
        <name>substrate</name>
    </ligand>
</feature>
<feature type="modified residue" description="Phosphoserine" evidence="13">
    <location>
        <position position="134"/>
    </location>
</feature>
<feature type="modified residue" description="Phosphoserine" evidence="13">
    <location>
        <position position="140"/>
    </location>
</feature>
<feature type="modified residue" description="Phosphoserine" evidence="13">
    <location>
        <position position="203"/>
    </location>
</feature>
<feature type="mutagenesis site" description="In fac1-1; zygote-lethal phenotype." evidence="4">
    <original>D</original>
    <variation>N</variation>
    <location>
        <position position="598"/>
    </location>
</feature>
<feature type="sequence conflict" description="In Ref. 5; BAH19646." evidence="10" ref="5">
    <original>D</original>
    <variation>G</variation>
    <location>
        <position position="324"/>
    </location>
</feature>
<feature type="turn" evidence="14">
    <location>
        <begin position="215"/>
        <end position="217"/>
    </location>
</feature>
<feature type="turn" evidence="14">
    <location>
        <begin position="244"/>
        <end position="247"/>
    </location>
</feature>
<feature type="helix" evidence="14">
    <location>
        <begin position="248"/>
        <end position="259"/>
    </location>
</feature>
<feature type="helix" evidence="14">
    <location>
        <begin position="325"/>
        <end position="338"/>
    </location>
</feature>
<feature type="helix" evidence="14">
    <location>
        <begin position="342"/>
        <end position="373"/>
    </location>
</feature>
<feature type="helix" evidence="14">
    <location>
        <begin position="374"/>
        <end position="376"/>
    </location>
</feature>
<feature type="turn" evidence="14">
    <location>
        <begin position="382"/>
        <end position="384"/>
    </location>
</feature>
<feature type="strand" evidence="14">
    <location>
        <begin position="387"/>
        <end position="393"/>
    </location>
</feature>
<feature type="turn" evidence="14">
    <location>
        <begin position="394"/>
        <end position="396"/>
    </location>
</feature>
<feature type="helix" evidence="14">
    <location>
        <begin position="400"/>
        <end position="412"/>
    </location>
</feature>
<feature type="strand" evidence="14">
    <location>
        <begin position="420"/>
        <end position="422"/>
    </location>
</feature>
<feature type="strand" evidence="14">
    <location>
        <begin position="425"/>
        <end position="427"/>
    </location>
</feature>
<feature type="helix" evidence="14">
    <location>
        <begin position="429"/>
        <end position="436"/>
    </location>
</feature>
<feature type="strand" evidence="14">
    <location>
        <begin position="461"/>
        <end position="463"/>
    </location>
</feature>
<feature type="helix" evidence="14">
    <location>
        <begin position="464"/>
        <end position="467"/>
    </location>
</feature>
<feature type="helix" evidence="14">
    <location>
        <begin position="474"/>
        <end position="479"/>
    </location>
</feature>
<feature type="strand" evidence="14">
    <location>
        <begin position="482"/>
        <end position="484"/>
    </location>
</feature>
<feature type="turn" evidence="14">
    <location>
        <begin position="485"/>
        <end position="490"/>
    </location>
</feature>
<feature type="helix" evidence="14">
    <location>
        <begin position="491"/>
        <end position="502"/>
    </location>
</feature>
<feature type="strand" evidence="14">
    <location>
        <begin position="505"/>
        <end position="515"/>
    </location>
</feature>
<feature type="strand" evidence="14">
    <location>
        <begin position="518"/>
        <end position="521"/>
    </location>
</feature>
<feature type="helix" evidence="14">
    <location>
        <begin position="523"/>
        <end position="532"/>
    </location>
</feature>
<feature type="turn" evidence="14">
    <location>
        <begin position="533"/>
        <end position="535"/>
    </location>
</feature>
<feature type="strand" evidence="14">
    <location>
        <begin position="539"/>
        <end position="548"/>
    </location>
</feature>
<feature type="helix" evidence="14">
    <location>
        <begin position="551"/>
        <end position="554"/>
    </location>
</feature>
<feature type="strand" evidence="14">
    <location>
        <begin position="557"/>
        <end position="559"/>
    </location>
</feature>
<feature type="helix" evidence="14">
    <location>
        <begin position="564"/>
        <end position="570"/>
    </location>
</feature>
<feature type="helix" evidence="14">
    <location>
        <begin position="573"/>
        <end position="579"/>
    </location>
</feature>
<feature type="helix" evidence="14">
    <location>
        <begin position="581"/>
        <end position="583"/>
    </location>
</feature>
<feature type="turn" evidence="14">
    <location>
        <begin position="585"/>
        <end position="587"/>
    </location>
</feature>
<feature type="helix" evidence="14">
    <location>
        <begin position="588"/>
        <end position="591"/>
    </location>
</feature>
<feature type="strand" evidence="14">
    <location>
        <begin position="594"/>
        <end position="601"/>
    </location>
</feature>
<feature type="turn" evidence="14">
    <location>
        <begin position="617"/>
        <end position="619"/>
    </location>
</feature>
<feature type="strand" evidence="14">
    <location>
        <begin position="622"/>
        <end position="624"/>
    </location>
</feature>
<feature type="helix" evidence="14">
    <location>
        <begin position="628"/>
        <end position="646"/>
    </location>
</feature>
<feature type="turn" evidence="14">
    <location>
        <begin position="647"/>
        <end position="650"/>
    </location>
</feature>
<feature type="strand" evidence="14">
    <location>
        <begin position="661"/>
        <end position="664"/>
    </location>
</feature>
<feature type="helix" evidence="14">
    <location>
        <begin position="667"/>
        <end position="675"/>
    </location>
</feature>
<feature type="helix" evidence="14">
    <location>
        <begin position="683"/>
        <end position="687"/>
    </location>
</feature>
<feature type="helix" evidence="14">
    <location>
        <begin position="689"/>
        <end position="698"/>
    </location>
</feature>
<feature type="strand" evidence="14">
    <location>
        <begin position="702"/>
        <end position="704"/>
    </location>
</feature>
<feature type="helix" evidence="14">
    <location>
        <begin position="706"/>
        <end position="709"/>
    </location>
</feature>
<feature type="turn" evidence="14">
    <location>
        <begin position="710"/>
        <end position="713"/>
    </location>
</feature>
<feature type="helix" evidence="14">
    <location>
        <begin position="721"/>
        <end position="726"/>
    </location>
</feature>
<feature type="strand" evidence="14">
    <location>
        <begin position="731"/>
        <end position="733"/>
    </location>
</feature>
<feature type="helix" evidence="14">
    <location>
        <begin position="738"/>
        <end position="741"/>
    </location>
</feature>
<feature type="strand" evidence="14">
    <location>
        <begin position="744"/>
        <end position="746"/>
    </location>
</feature>
<feature type="helix" evidence="14">
    <location>
        <begin position="747"/>
        <end position="759"/>
    </location>
</feature>
<feature type="helix" evidence="14">
    <location>
        <begin position="763"/>
        <end position="776"/>
    </location>
</feature>
<feature type="helix" evidence="14">
    <location>
        <begin position="781"/>
        <end position="787"/>
    </location>
</feature>
<feature type="turn" evidence="14">
    <location>
        <begin position="790"/>
        <end position="793"/>
    </location>
</feature>
<feature type="strand" evidence="14">
    <location>
        <begin position="794"/>
        <end position="796"/>
    </location>
</feature>
<feature type="helix" evidence="14">
    <location>
        <begin position="797"/>
        <end position="799"/>
    </location>
</feature>
<feature type="helix" evidence="14">
    <location>
        <begin position="802"/>
        <end position="805"/>
    </location>
</feature>
<feature type="helix" evidence="14">
    <location>
        <begin position="809"/>
        <end position="826"/>
    </location>
</feature>
<feature type="turn" evidence="14">
    <location>
        <begin position="827"/>
        <end position="829"/>
    </location>
</feature>
<evidence type="ECO:0000250" key="1"/>
<evidence type="ECO:0000255" key="2"/>
<evidence type="ECO:0000256" key="3">
    <source>
        <dbReference type="SAM" id="MobiDB-lite"/>
    </source>
</evidence>
<evidence type="ECO:0000269" key="4">
    <source>
    </source>
</evidence>
<evidence type="ECO:0000269" key="5">
    <source>
    </source>
</evidence>
<evidence type="ECO:0000269" key="6">
    <source>
    </source>
</evidence>
<evidence type="ECO:0000269" key="7">
    <source>
    </source>
</evidence>
<evidence type="ECO:0000269" key="8">
    <source>
    </source>
</evidence>
<evidence type="ECO:0000303" key="9">
    <source>
    </source>
</evidence>
<evidence type="ECO:0000305" key="10"/>
<evidence type="ECO:0000312" key="11">
    <source>
        <dbReference type="Araport" id="AT2G38280"/>
    </source>
</evidence>
<evidence type="ECO:0000312" key="12">
    <source>
        <dbReference type="EMBL" id="AAC27176.2"/>
    </source>
</evidence>
<evidence type="ECO:0007744" key="13">
    <source>
    </source>
</evidence>
<evidence type="ECO:0007829" key="14">
    <source>
        <dbReference type="PDB" id="2A3L"/>
    </source>
</evidence>
<protein>
    <recommendedName>
        <fullName evidence="9">AMP deaminase</fullName>
        <shortName evidence="9">AtAMPD</shortName>
        <ecNumber evidence="10">3.5.4.6</ecNumber>
    </recommendedName>
    <alternativeName>
        <fullName evidence="9">Protein EMBRYONIC FACTOR 1</fullName>
    </alternativeName>
</protein>
<accession>O80452</accession>
<accession>B9DFX9</accession>
<accession>Q56XX1</accession>
<accession>Q93ZR9</accession>
<gene>
    <name evidence="9" type="primary">AMPD</name>
    <name evidence="9" type="synonym">FAC1</name>
    <name evidence="11" type="ordered locus">At2g38280</name>
    <name evidence="12" type="ORF">F16M14.21</name>
</gene>
<name>AMPD_ARATH</name>
<keyword id="KW-0002">3D-structure</keyword>
<keyword id="KW-0021">Allosteric enzyme</keyword>
<keyword id="KW-0067">ATP-binding</keyword>
<keyword id="KW-0256">Endoplasmic reticulum</keyword>
<keyword id="KW-0378">Hydrolase</keyword>
<keyword id="KW-0472">Membrane</keyword>
<keyword id="KW-0479">Metal-binding</keyword>
<keyword id="KW-0492">Microsome</keyword>
<keyword id="KW-0546">Nucleotide metabolism</keyword>
<keyword id="KW-0547">Nucleotide-binding</keyword>
<keyword id="KW-0597">Phosphoprotein</keyword>
<keyword id="KW-1185">Reference proteome</keyword>
<keyword id="KW-0812">Transmembrane</keyword>
<keyword id="KW-1133">Transmembrane helix</keyword>
<keyword id="KW-0862">Zinc</keyword>
<proteinExistence type="evidence at protein level"/>
<organism>
    <name type="scientific">Arabidopsis thaliana</name>
    <name type="common">Mouse-ear cress</name>
    <dbReference type="NCBI Taxonomy" id="3702"/>
    <lineage>
        <taxon>Eukaryota</taxon>
        <taxon>Viridiplantae</taxon>
        <taxon>Streptophyta</taxon>
        <taxon>Embryophyta</taxon>
        <taxon>Tracheophyta</taxon>
        <taxon>Spermatophyta</taxon>
        <taxon>Magnoliopsida</taxon>
        <taxon>eudicotyledons</taxon>
        <taxon>Gunneridae</taxon>
        <taxon>Pentapetalae</taxon>
        <taxon>rosids</taxon>
        <taxon>malvids</taxon>
        <taxon>Brassicales</taxon>
        <taxon>Brassicaceae</taxon>
        <taxon>Camelineae</taxon>
        <taxon>Arabidopsis</taxon>
    </lineage>
</organism>
<dbReference type="EC" id="3.5.4.6" evidence="10"/>
<dbReference type="EMBL" id="AC003028">
    <property type="protein sequence ID" value="AAC27176.2"/>
    <property type="molecule type" value="Genomic_DNA"/>
</dbReference>
<dbReference type="EMBL" id="CP002685">
    <property type="protein sequence ID" value="AEC09516.1"/>
    <property type="molecule type" value="Genomic_DNA"/>
</dbReference>
<dbReference type="EMBL" id="CP002685">
    <property type="protein sequence ID" value="AEC09517.1"/>
    <property type="molecule type" value="Genomic_DNA"/>
</dbReference>
<dbReference type="EMBL" id="AY056301">
    <property type="protein sequence ID" value="AAL07150.1"/>
    <property type="molecule type" value="mRNA"/>
</dbReference>
<dbReference type="EMBL" id="AY133852">
    <property type="protein sequence ID" value="AAM91786.1"/>
    <property type="molecule type" value="mRNA"/>
</dbReference>
<dbReference type="EMBL" id="AK316943">
    <property type="protein sequence ID" value="BAH19646.1"/>
    <property type="molecule type" value="mRNA"/>
</dbReference>
<dbReference type="EMBL" id="AK221552">
    <property type="protein sequence ID" value="BAD94943.1"/>
    <property type="status" value="ALT_SEQ"/>
    <property type="molecule type" value="mRNA"/>
</dbReference>
<dbReference type="PIR" id="T01259">
    <property type="entry name" value="T01259"/>
</dbReference>
<dbReference type="RefSeq" id="NP_565886.1">
    <property type="nucleotide sequence ID" value="NM_129384.3"/>
</dbReference>
<dbReference type="RefSeq" id="NP_850294.1">
    <property type="nucleotide sequence ID" value="NM_179963.3"/>
</dbReference>
<dbReference type="PDB" id="2A3L">
    <property type="method" value="X-ray"/>
    <property type="resolution" value="3.34 A"/>
    <property type="chains" value="A=139-839"/>
</dbReference>
<dbReference type="PDBsum" id="2A3L"/>
<dbReference type="SMR" id="O80452"/>
<dbReference type="BioGRID" id="3750">
    <property type="interactions" value="5"/>
</dbReference>
<dbReference type="FunCoup" id="O80452">
    <property type="interactions" value="3150"/>
</dbReference>
<dbReference type="IntAct" id="O80452">
    <property type="interactions" value="3"/>
</dbReference>
<dbReference type="STRING" id="3702.O80452"/>
<dbReference type="BindingDB" id="O80452"/>
<dbReference type="ChEMBL" id="CHEMBL2366458"/>
<dbReference type="iPTMnet" id="O80452"/>
<dbReference type="PaxDb" id="3702-AT2G38280.2"/>
<dbReference type="ProteomicsDB" id="244448"/>
<dbReference type="EnsemblPlants" id="AT2G38280.1">
    <property type="protein sequence ID" value="AT2G38280.1"/>
    <property type="gene ID" value="AT2G38280"/>
</dbReference>
<dbReference type="EnsemblPlants" id="AT2G38280.2">
    <property type="protein sequence ID" value="AT2G38280.2"/>
    <property type="gene ID" value="AT2G38280"/>
</dbReference>
<dbReference type="GeneID" id="818408"/>
<dbReference type="Gramene" id="AT2G38280.1">
    <property type="protein sequence ID" value="AT2G38280.1"/>
    <property type="gene ID" value="AT2G38280"/>
</dbReference>
<dbReference type="Gramene" id="AT2G38280.2">
    <property type="protein sequence ID" value="AT2G38280.2"/>
    <property type="gene ID" value="AT2G38280"/>
</dbReference>
<dbReference type="KEGG" id="ath:AT2G38280"/>
<dbReference type="Araport" id="AT2G38280"/>
<dbReference type="TAIR" id="AT2G38280">
    <property type="gene designation" value="FAC1"/>
</dbReference>
<dbReference type="eggNOG" id="KOG1096">
    <property type="taxonomic scope" value="Eukaryota"/>
</dbReference>
<dbReference type="HOGENOM" id="CLU_003782_3_0_1"/>
<dbReference type="InParanoid" id="O80452"/>
<dbReference type="OMA" id="GNAGPEC"/>
<dbReference type="OrthoDB" id="1723809at2759"/>
<dbReference type="PhylomeDB" id="O80452"/>
<dbReference type="BioCyc" id="ARA:AT2G38280-MONOMER"/>
<dbReference type="BRENDA" id="3.5.4.6">
    <property type="organism ID" value="399"/>
</dbReference>
<dbReference type="SABIO-RK" id="O80452"/>
<dbReference type="UniPathway" id="UPA00591">
    <property type="reaction ID" value="UER00663"/>
</dbReference>
<dbReference type="CD-CODE" id="4299E36E">
    <property type="entry name" value="Nucleolus"/>
</dbReference>
<dbReference type="EvolutionaryTrace" id="O80452"/>
<dbReference type="PRO" id="PR:O80452"/>
<dbReference type="Proteomes" id="UP000006548">
    <property type="component" value="Chromosome 2"/>
</dbReference>
<dbReference type="ExpressionAtlas" id="O80452">
    <property type="expression patterns" value="baseline and differential"/>
</dbReference>
<dbReference type="GO" id="GO:0005783">
    <property type="term" value="C:endoplasmic reticulum"/>
    <property type="evidence" value="ECO:0007005"/>
    <property type="project" value="TAIR"/>
</dbReference>
<dbReference type="GO" id="GO:0043231">
    <property type="term" value="C:intracellular membrane-bounded organelle"/>
    <property type="evidence" value="ECO:0000314"/>
    <property type="project" value="TAIR"/>
</dbReference>
<dbReference type="GO" id="GO:0016020">
    <property type="term" value="C:membrane"/>
    <property type="evidence" value="ECO:0007669"/>
    <property type="project" value="UniProtKB-SubCell"/>
</dbReference>
<dbReference type="GO" id="GO:0003876">
    <property type="term" value="F:AMP deaminase activity"/>
    <property type="evidence" value="ECO:0007669"/>
    <property type="project" value="UniProtKB-EC"/>
</dbReference>
<dbReference type="GO" id="GO:0005524">
    <property type="term" value="F:ATP binding"/>
    <property type="evidence" value="ECO:0007669"/>
    <property type="project" value="UniProtKB-KW"/>
</dbReference>
<dbReference type="GO" id="GO:0046872">
    <property type="term" value="F:metal ion binding"/>
    <property type="evidence" value="ECO:0007669"/>
    <property type="project" value="UniProtKB-KW"/>
</dbReference>
<dbReference type="GO" id="GO:0043424">
    <property type="term" value="F:protein histidine kinase binding"/>
    <property type="evidence" value="ECO:0000353"/>
    <property type="project" value="UniProtKB"/>
</dbReference>
<dbReference type="GO" id="GO:0009793">
    <property type="term" value="P:embryo development ending in seed dormancy"/>
    <property type="evidence" value="ECO:0000315"/>
    <property type="project" value="TAIR"/>
</dbReference>
<dbReference type="GO" id="GO:0032264">
    <property type="term" value="P:IMP salvage"/>
    <property type="evidence" value="ECO:0007669"/>
    <property type="project" value="UniProtKB-UniPathway"/>
</dbReference>
<dbReference type="CDD" id="cd01319">
    <property type="entry name" value="AMPD"/>
    <property type="match status" value="1"/>
</dbReference>
<dbReference type="FunFam" id="4.10.800.20:FF:000001">
    <property type="entry name" value="AMP deaminase"/>
    <property type="match status" value="1"/>
</dbReference>
<dbReference type="FunFam" id="3.20.20.140:FF:000035">
    <property type="entry name" value="Probable amp deaminase"/>
    <property type="match status" value="1"/>
</dbReference>
<dbReference type="Gene3D" id="4.10.800.20">
    <property type="match status" value="1"/>
</dbReference>
<dbReference type="Gene3D" id="3.20.20.140">
    <property type="entry name" value="Metal-dependent hydrolases"/>
    <property type="match status" value="1"/>
</dbReference>
<dbReference type="InterPro" id="IPR006650">
    <property type="entry name" value="A/AMP_deam_AS"/>
</dbReference>
<dbReference type="InterPro" id="IPR006329">
    <property type="entry name" value="AMPD"/>
</dbReference>
<dbReference type="InterPro" id="IPR032466">
    <property type="entry name" value="Metal_Hydrolase"/>
</dbReference>
<dbReference type="NCBIfam" id="TIGR01429">
    <property type="entry name" value="AMP_deaminase"/>
    <property type="match status" value="1"/>
</dbReference>
<dbReference type="PANTHER" id="PTHR11359">
    <property type="entry name" value="AMP DEAMINASE"/>
    <property type="match status" value="1"/>
</dbReference>
<dbReference type="PANTHER" id="PTHR11359:SF0">
    <property type="entry name" value="AMP DEAMINASE"/>
    <property type="match status" value="1"/>
</dbReference>
<dbReference type="Pfam" id="PF19326">
    <property type="entry name" value="AMP_deaminase"/>
    <property type="match status" value="1"/>
</dbReference>
<dbReference type="SUPFAM" id="SSF51556">
    <property type="entry name" value="Metallo-dependent hydrolases"/>
    <property type="match status" value="1"/>
</dbReference>
<dbReference type="PROSITE" id="PS00485">
    <property type="entry name" value="A_DEAMINASE"/>
    <property type="match status" value="1"/>
</dbReference>
<reference key="1">
    <citation type="journal article" date="2005" name="Plant J.">
        <title>EMBRYONIC FACTOR 1 encodes an AMP deaminase and is essential for the zygote to embryo transition in Arabidopsis.</title>
        <authorList>
            <person name="Xu J."/>
            <person name="Zhang H.-Y."/>
            <person name="Xie C.-H."/>
            <person name="Xue H.-W."/>
            <person name="Dijkhuis P."/>
            <person name="Liu C.-M."/>
        </authorList>
    </citation>
    <scope>NUCLEOTIDE SEQUENCE [GENOMIC DNA]</scope>
    <scope>MUTAGENESIS OF ASP-598</scope>
    <scope>FUNCTION</scope>
    <scope>TISSUE SPECIFICITY</scope>
    <scope>DEVELOPMENTAL STAGE</scope>
    <source>
        <strain>cv. Landsberg erecta</strain>
    </source>
</reference>
<reference key="2">
    <citation type="journal article" date="1999" name="Nature">
        <title>Sequence and analysis of chromosome 2 of the plant Arabidopsis thaliana.</title>
        <authorList>
            <person name="Lin X."/>
            <person name="Kaul S."/>
            <person name="Rounsley S.D."/>
            <person name="Shea T.P."/>
            <person name="Benito M.-I."/>
            <person name="Town C.D."/>
            <person name="Fujii C.Y."/>
            <person name="Mason T.M."/>
            <person name="Bowman C.L."/>
            <person name="Barnstead M.E."/>
            <person name="Feldblyum T.V."/>
            <person name="Buell C.R."/>
            <person name="Ketchum K.A."/>
            <person name="Lee J.J."/>
            <person name="Ronning C.M."/>
            <person name="Koo H.L."/>
            <person name="Moffat K.S."/>
            <person name="Cronin L.A."/>
            <person name="Shen M."/>
            <person name="Pai G."/>
            <person name="Van Aken S."/>
            <person name="Umayam L."/>
            <person name="Tallon L.J."/>
            <person name="Gill J.E."/>
            <person name="Adams M.D."/>
            <person name="Carrera A.J."/>
            <person name="Creasy T.H."/>
            <person name="Goodman H.M."/>
            <person name="Somerville C.R."/>
            <person name="Copenhaver G.P."/>
            <person name="Preuss D."/>
            <person name="Nierman W.C."/>
            <person name="White O."/>
            <person name="Eisen J.A."/>
            <person name="Salzberg S.L."/>
            <person name="Fraser C.M."/>
            <person name="Venter J.C."/>
        </authorList>
    </citation>
    <scope>NUCLEOTIDE SEQUENCE [LARGE SCALE GENOMIC DNA]</scope>
    <source>
        <strain>cv. Columbia</strain>
    </source>
</reference>
<reference key="3">
    <citation type="journal article" date="2017" name="Plant J.">
        <title>Araport11: a complete reannotation of the Arabidopsis thaliana reference genome.</title>
        <authorList>
            <person name="Cheng C.Y."/>
            <person name="Krishnakumar V."/>
            <person name="Chan A.P."/>
            <person name="Thibaud-Nissen F."/>
            <person name="Schobel S."/>
            <person name="Town C.D."/>
        </authorList>
    </citation>
    <scope>GENOME REANNOTATION</scope>
    <source>
        <strain>cv. Columbia</strain>
    </source>
</reference>
<reference key="4">
    <citation type="journal article" date="2003" name="Science">
        <title>Empirical analysis of transcriptional activity in the Arabidopsis genome.</title>
        <authorList>
            <person name="Yamada K."/>
            <person name="Lim J."/>
            <person name="Dale J.M."/>
            <person name="Chen H."/>
            <person name="Shinn P."/>
            <person name="Palm C.J."/>
            <person name="Southwick A.M."/>
            <person name="Wu H.C."/>
            <person name="Kim C.J."/>
            <person name="Nguyen M."/>
            <person name="Pham P.K."/>
            <person name="Cheuk R.F."/>
            <person name="Karlin-Newmann G."/>
            <person name="Liu S.X."/>
            <person name="Lam B."/>
            <person name="Sakano H."/>
            <person name="Wu T."/>
            <person name="Yu G."/>
            <person name="Miranda M."/>
            <person name="Quach H.L."/>
            <person name="Tripp M."/>
            <person name="Chang C.H."/>
            <person name="Lee J.M."/>
            <person name="Toriumi M.J."/>
            <person name="Chan M.M."/>
            <person name="Tang C.C."/>
            <person name="Onodera C.S."/>
            <person name="Deng J.M."/>
            <person name="Akiyama K."/>
            <person name="Ansari Y."/>
            <person name="Arakawa T."/>
            <person name="Banh J."/>
            <person name="Banno F."/>
            <person name="Bowser L."/>
            <person name="Brooks S.Y."/>
            <person name="Carninci P."/>
            <person name="Chao Q."/>
            <person name="Choy N."/>
            <person name="Enju A."/>
            <person name="Goldsmith A.D."/>
            <person name="Gurjal M."/>
            <person name="Hansen N.F."/>
            <person name="Hayashizaki Y."/>
            <person name="Johnson-Hopson C."/>
            <person name="Hsuan V.W."/>
            <person name="Iida K."/>
            <person name="Karnes M."/>
            <person name="Khan S."/>
            <person name="Koesema E."/>
            <person name="Ishida J."/>
            <person name="Jiang P.X."/>
            <person name="Jones T."/>
            <person name="Kawai J."/>
            <person name="Kamiya A."/>
            <person name="Meyers C."/>
            <person name="Nakajima M."/>
            <person name="Narusaka M."/>
            <person name="Seki M."/>
            <person name="Sakurai T."/>
            <person name="Satou M."/>
            <person name="Tamse R."/>
            <person name="Vaysberg M."/>
            <person name="Wallender E.K."/>
            <person name="Wong C."/>
            <person name="Yamamura Y."/>
            <person name="Yuan S."/>
            <person name="Shinozaki K."/>
            <person name="Davis R.W."/>
            <person name="Theologis A."/>
            <person name="Ecker J.R."/>
        </authorList>
    </citation>
    <scope>NUCLEOTIDE SEQUENCE [LARGE SCALE MRNA]</scope>
    <source>
        <strain>cv. Columbia</strain>
    </source>
</reference>
<reference key="5">
    <citation type="journal article" date="2009" name="DNA Res.">
        <title>Analysis of multiple occurrences of alternative splicing events in Arabidopsis thaliana using novel sequenced full-length cDNAs.</title>
        <authorList>
            <person name="Iida K."/>
            <person name="Fukami-Kobayashi K."/>
            <person name="Toyoda A."/>
            <person name="Sakaki Y."/>
            <person name="Kobayashi M."/>
            <person name="Seki M."/>
            <person name="Shinozaki K."/>
        </authorList>
    </citation>
    <scope>NUCLEOTIDE SEQUENCE [LARGE SCALE MRNA]</scope>
    <source>
        <strain>cv. Columbia</strain>
    </source>
</reference>
<reference key="6">
    <citation type="submission" date="2005-03" db="EMBL/GenBank/DDBJ databases">
        <title>Large-scale analysis of RIKEN Arabidopsis full-length (RAFL) cDNAs.</title>
        <authorList>
            <person name="Totoki Y."/>
            <person name="Seki M."/>
            <person name="Ishida J."/>
            <person name="Nakajima M."/>
            <person name="Enju A."/>
            <person name="Kamiya A."/>
            <person name="Narusaka M."/>
            <person name="Shin-i T."/>
            <person name="Nakagawa M."/>
            <person name="Sakamoto N."/>
            <person name="Oishi K."/>
            <person name="Kohara Y."/>
            <person name="Kobayashi M."/>
            <person name="Toyoda A."/>
            <person name="Sakaki Y."/>
            <person name="Sakurai T."/>
            <person name="Iida K."/>
            <person name="Akiyama K."/>
            <person name="Satou M."/>
            <person name="Toyoda T."/>
            <person name="Konagaya A."/>
            <person name="Carninci P."/>
            <person name="Kawai J."/>
            <person name="Hayashizaki Y."/>
            <person name="Shinozaki K."/>
        </authorList>
    </citation>
    <scope>NUCLEOTIDE SEQUENCE [LARGE SCALE MRNA] OF 1-357</scope>
    <source>
        <strain>cv. Columbia</strain>
    </source>
</reference>
<reference key="7">
    <citation type="journal article" date="2008" name="J. Proteome Res.">
        <title>Site-specific phosphorylation profiling of Arabidopsis proteins by mass spectrometry and peptide chip analysis.</title>
        <authorList>
            <person name="de la Fuente van Bentem S."/>
            <person name="Anrather D."/>
            <person name="Dohnal I."/>
            <person name="Roitinger E."/>
            <person name="Csaszar E."/>
            <person name="Joore J."/>
            <person name="Buijnink J."/>
            <person name="Carreri A."/>
            <person name="Forzani C."/>
            <person name="Lorkovic Z.J."/>
            <person name="Barta A."/>
            <person name="Lecourieux D."/>
            <person name="Verhounig A."/>
            <person name="Jonak C."/>
            <person name="Hirt H."/>
        </authorList>
    </citation>
    <scope>PHOSPHORYLATION [LARGE SCALE ANALYSIS] AT SER-134; SER-140 AND SER-203</scope>
    <scope>IDENTIFICATION BY MASS SPECTROMETRY [LARGE SCALE ANALYSIS]</scope>
    <source>
        <tissue>Root</tissue>
    </source>
</reference>
<reference key="8">
    <citation type="journal article" date="2008" name="J. Proteome Res.">
        <title>Toward an interaction map of the two-component signaling pathway of Arabidopsis thaliana.</title>
        <authorList>
            <person name="Dortay H."/>
            <person name="Gruhn N."/>
            <person name="Pfeifer A."/>
            <person name="Schwerdtner M."/>
            <person name="Schmuelling T."/>
            <person name="Heyl A."/>
        </authorList>
    </citation>
    <scope>INTERACTION WITH AHK4</scope>
</reference>
<reference key="9">
    <citation type="journal article" date="2005" name="Acta Crystallogr. F">
        <title>Crystallization and preliminary X-ray crystallographic analysis of adenosine 5'-monophosphate deaminase (AMPD) from Arabidopsis thaliana in complex with coformycin 5'-phosphate.</title>
        <authorList>
            <person name="Han B.W."/>
            <person name="Bingman C.A."/>
            <person name="Mahnke D.K."/>
            <person name="Sabina R.L."/>
            <person name="Phillips G.N. Jr."/>
        </authorList>
    </citation>
    <scope>CRYSTALLIZATION</scope>
    <scope>X-RAY CRYSTALLOGRAPHY (3.3 ANGSTROMS) OF 140-839 IN COMPLEX WITH COFORMYCIN 5'-PHOSPHATE AND ZINC IONS</scope>
</reference>
<reference key="10">
    <citation type="journal article" date="2009" name="Plant Physiol.">
        <title>Large-scale Arabidopsis phosphoproteome profiling reveals novel chloroplast kinase substrates and phosphorylation networks.</title>
        <authorList>
            <person name="Reiland S."/>
            <person name="Messerli G."/>
            <person name="Baerenfaller K."/>
            <person name="Gerrits B."/>
            <person name="Endler A."/>
            <person name="Grossmann J."/>
            <person name="Gruissem W."/>
            <person name="Baginsky S."/>
        </authorList>
    </citation>
    <scope>IDENTIFICATION BY MASS SPECTROMETRY [LARGE SCALE ANALYSIS]</scope>
</reference>
<reference key="11">
    <citation type="journal article" date="2010" name="Plant J.">
        <title>Arabidopsis homolog of the yeast TREX-2 mRNA export complex: components and anchoring nucleoporin.</title>
        <authorList>
            <person name="Lu Q."/>
            <person name="Tang X."/>
            <person name="Tian G."/>
            <person name="Wang F."/>
            <person name="Liu K."/>
            <person name="Nguyen V."/>
            <person name="Kohalmi S.E."/>
            <person name="Keller W.A."/>
            <person name="Tsang E.W."/>
            <person name="Harada J.J."/>
            <person name="Rothstein S.J."/>
            <person name="Cui Y."/>
        </authorList>
    </citation>
    <scope>INTERACTION WITH EER5</scope>
</reference>
<reference key="12">
    <citation type="journal article" date="2006" name="J. Biol. Chem.">
        <title>Membrane association, mechanism of action, and structure of Arabidopsis embryonic factor 1 (FAC1).</title>
        <authorList>
            <person name="Han B.W."/>
            <person name="Bingman C.A."/>
            <person name="Mahnke D.K."/>
            <person name="Bannen R.M."/>
            <person name="Bednarek S.Y."/>
            <person name="Sabina R.L."/>
            <person name="Phillips G.N. Jr."/>
        </authorList>
    </citation>
    <scope>X-RAY CRYSTALLOGRAPHY (3.3 ANGSTROMS) OF 140-839 IN COMPLEX WITH COFORMYCIN 5'-PHOSPHATE; PHOSPHATE AND ZINC IONS</scope>
    <scope>CATALYTIC ACTIVITY</scope>
    <scope>SUBUNIT</scope>
    <scope>COFACTOR</scope>
    <scope>SUBCELLULAR LOCATION</scope>
    <scope>ACTIVITY REGULATION</scope>
    <scope>BIOPHYSICOCHEMICAL PROPERTIES</scope>
</reference>
<comment type="function">
    <text evidence="4">AMP deaminase plays a critical role in energy metabolism. Essential for the transition from zygote to embryo.</text>
</comment>
<comment type="catalytic activity">
    <reaction evidence="6">
        <text>AMP + H2O + H(+) = IMP + NH4(+)</text>
        <dbReference type="Rhea" id="RHEA:14777"/>
        <dbReference type="ChEBI" id="CHEBI:15377"/>
        <dbReference type="ChEBI" id="CHEBI:15378"/>
        <dbReference type="ChEBI" id="CHEBI:28938"/>
        <dbReference type="ChEBI" id="CHEBI:58053"/>
        <dbReference type="ChEBI" id="CHEBI:456215"/>
        <dbReference type="EC" id="3.5.4.6"/>
    </reaction>
</comment>
<comment type="cofactor">
    <cofactor evidence="6">
        <name>Zn(2+)</name>
        <dbReference type="ChEBI" id="CHEBI:29105"/>
    </cofactor>
    <text evidence="6">Binds 1 zinc ion per subunit.</text>
</comment>
<comment type="activity regulation">
    <text evidence="6">Activated by ATP. Activated by sulfate ions (in vitro). Inhibited by phosphate ions.</text>
</comment>
<comment type="biophysicochemical properties">
    <kinetics>
        <KM evidence="6">6.7 mM for AMP (in the absence of ATP)</KM>
        <KM evidence="6">0.26 mM for AMP (in the presence of 1 mM ATP)</KM>
        <Vmax evidence="6">17.0 umol/min/mg enzyme (in the absence of ATP)</Vmax>
        <Vmax evidence="6">375.0 umol/min/mg enzyme (in the presence of 1 mM ATP)</Vmax>
    </kinetics>
</comment>
<comment type="pathway">
    <text>Purine metabolism; IMP biosynthesis via salvage pathway; IMP from AMP: step 1/1.</text>
</comment>
<comment type="subunit">
    <text evidence="5 6 7 8">Homodimer. Interacts with AHK4. Interacts with EER5 (PubMed:19843313).</text>
</comment>
<comment type="interaction">
    <interactant intactId="EBI-1807679">
        <id>O80452</id>
    </interactant>
    <interactant intactId="EBI-1100775">
        <id>Q9C5U0</id>
        <label>AHK4</label>
    </interactant>
    <organismsDiffer>false</organismsDiffer>
    <experiments>2</experiments>
</comment>
<comment type="subcellular location">
    <subcellularLocation>
        <location evidence="6">Membrane</location>
        <topology evidence="6">Single-pass membrane protein</topology>
    </subcellularLocation>
    <subcellularLocation>
        <location evidence="6">Microsome membrane</location>
    </subcellularLocation>
    <text evidence="1">Might be associated with the inner mitochondrial membrane.</text>
</comment>
<comment type="tissue specificity">
    <text evidence="4">Expressed in seedlings, roots, leaves, flowers, pollen grains, pollen tubes and siliques, and at a lower level in stems.</text>
</comment>
<comment type="developmental stage">
    <text evidence="4">Expressed in both male and female gametophytes, at the zygote stage, in the endosperm, and during early embryo development. Observed in cotyledonary embryos and in the basal part of the embryo, but not in the suspensor or in mature embryos. Also expressed during somatic embryogenesis.</text>
</comment>
<comment type="similarity">
    <text evidence="10">Belongs to the metallo-dependent hydrolases superfamily. Adenosine and AMP deaminases family.</text>
</comment>
<comment type="sequence caution" evidence="10">
    <conflict type="miscellaneous discrepancy">
        <sequence resource="EMBL-CDS" id="BAD94943"/>
    </conflict>
    <text>Intron retention.</text>
</comment>
<sequence length="839" mass="95130">MEPNIYQLALAALFGASFVAVSGFFMHFKALNLVLERGKERKENPDGDEPQNPTLVRRRSQVRRKVNDQYGRSPASLPDATPFTDGGGGGGGDTGRSNGHVYVDEIPPGLPRLHTPSEGRASVHGASSIRKTGSFVRPISPKSPVASASAFESVEESDDDDNLTNSEGLDASYLQANGDNEMPADANEEQISMAASSMIRSHSVSGDLHGVQPDPIAADILRKEPEQETFVRLNVPLEVPTSDEVEAYKCLQECLELRKRYVFQETVAPWEKEVISDPSTPKPNTEPFAHYPQGKSDHCFEMQDGVVHVFANKDAKEDLFPVADATAFFTDLHHVLKVIAAGNIRTLCHRRLVLLEQKFNLHLMLNADKEFLAQKSAPHRDFYNVRKVDTHVHHSACMNQKHLLRFIKSKLRKEPDEVVIFRDGTYLTLREVFESLDLTGYDLNVDLLDVHADKSTFHRFDKFNLKYNPCGQSRLREIFLKQDNLIQGRFLGEITKQVFSDLEASKYQMAEYRISIYGRKMSEWDQLASWIVNNDLYSENVVWLIQLPRLYNIYKDMGIVTSFQNILDNIFIPLFEATVDPDSHPQLHVFLKQVVGFDLVDDESKPERRPTKHMPTPAQWTNAFNPAFSYYVYYCYANLYVLNKLRESKGMTTITLRPHSGEAGDIDHLAATFLTCHSIAHGINLRKSPVLQYLYYLAQIGLAMSPLSNNSLFLDYHRNPFPVFFLRGLNVSLSTDDPLQIHLTKEPLVEEYSIAASVWKLSACDLCEIARNSVYQSGFSHALKSHWIGKDYYKRGPDGNDIHKTNVPHIRVEFRDTIWKEEMQQVYLGKAVISDEVVP</sequence>